<evidence type="ECO:0000255" key="1">
    <source>
        <dbReference type="HAMAP-Rule" id="MF_01849"/>
    </source>
</evidence>
<evidence type="ECO:0000255" key="2">
    <source>
        <dbReference type="PROSITE-ProRule" id="PRU01266"/>
    </source>
</evidence>
<feature type="chain" id="PRO_0000350159" description="Dual-specificity RNA methyltransferase RlmN">
    <location>
        <begin position="1"/>
        <end position="388"/>
    </location>
</feature>
<feature type="domain" description="Radical SAM core" evidence="2">
    <location>
        <begin position="115"/>
        <end position="354"/>
    </location>
</feature>
<feature type="active site" description="Proton acceptor" evidence="1">
    <location>
        <position position="109"/>
    </location>
</feature>
<feature type="active site" description="S-methylcysteine intermediate" evidence="1">
    <location>
        <position position="359"/>
    </location>
</feature>
<feature type="binding site" evidence="1">
    <location>
        <position position="129"/>
    </location>
    <ligand>
        <name>[4Fe-4S] cluster</name>
        <dbReference type="ChEBI" id="CHEBI:49883"/>
        <note>4Fe-4S-S-AdoMet</note>
    </ligand>
</feature>
<feature type="binding site" evidence="1">
    <location>
        <position position="133"/>
    </location>
    <ligand>
        <name>[4Fe-4S] cluster</name>
        <dbReference type="ChEBI" id="CHEBI:49883"/>
        <note>4Fe-4S-S-AdoMet</note>
    </ligand>
</feature>
<feature type="binding site" evidence="1">
    <location>
        <position position="136"/>
    </location>
    <ligand>
        <name>[4Fe-4S] cluster</name>
        <dbReference type="ChEBI" id="CHEBI:49883"/>
        <note>4Fe-4S-S-AdoMet</note>
    </ligand>
</feature>
<feature type="binding site" evidence="1">
    <location>
        <begin position="183"/>
        <end position="184"/>
    </location>
    <ligand>
        <name>S-adenosyl-L-methionine</name>
        <dbReference type="ChEBI" id="CHEBI:59789"/>
    </ligand>
</feature>
<feature type="binding site" evidence="1">
    <location>
        <position position="215"/>
    </location>
    <ligand>
        <name>S-adenosyl-L-methionine</name>
        <dbReference type="ChEBI" id="CHEBI:59789"/>
    </ligand>
</feature>
<feature type="binding site" evidence="1">
    <location>
        <begin position="237"/>
        <end position="239"/>
    </location>
    <ligand>
        <name>S-adenosyl-L-methionine</name>
        <dbReference type="ChEBI" id="CHEBI:59789"/>
    </ligand>
</feature>
<feature type="binding site" evidence="1">
    <location>
        <position position="316"/>
    </location>
    <ligand>
        <name>S-adenosyl-L-methionine</name>
        <dbReference type="ChEBI" id="CHEBI:59789"/>
    </ligand>
</feature>
<feature type="disulfide bond" description="(transient)" evidence="1">
    <location>
        <begin position="122"/>
        <end position="359"/>
    </location>
</feature>
<keyword id="KW-0004">4Fe-4S</keyword>
<keyword id="KW-0963">Cytoplasm</keyword>
<keyword id="KW-1015">Disulfide bond</keyword>
<keyword id="KW-0408">Iron</keyword>
<keyword id="KW-0411">Iron-sulfur</keyword>
<keyword id="KW-0479">Metal-binding</keyword>
<keyword id="KW-0489">Methyltransferase</keyword>
<keyword id="KW-1185">Reference proteome</keyword>
<keyword id="KW-0698">rRNA processing</keyword>
<keyword id="KW-0949">S-adenosyl-L-methionine</keyword>
<keyword id="KW-0808">Transferase</keyword>
<keyword id="KW-0819">tRNA processing</keyword>
<gene>
    <name evidence="1" type="primary">rlmN</name>
    <name type="ordered locus">ESA_00741</name>
</gene>
<protein>
    <recommendedName>
        <fullName evidence="1">Dual-specificity RNA methyltransferase RlmN</fullName>
        <ecNumber evidence="1">2.1.1.192</ecNumber>
    </recommendedName>
    <alternativeName>
        <fullName evidence="1">23S rRNA (adenine(2503)-C(2))-methyltransferase</fullName>
    </alternativeName>
    <alternativeName>
        <fullName evidence="1">23S rRNA m2A2503 methyltransferase</fullName>
    </alternativeName>
    <alternativeName>
        <fullName evidence="1">Ribosomal RNA large subunit methyltransferase N</fullName>
    </alternativeName>
    <alternativeName>
        <fullName evidence="1">tRNA (adenine(37)-C(2))-methyltransferase</fullName>
    </alternativeName>
    <alternativeName>
        <fullName evidence="1">tRNA m2A37 methyltransferase</fullName>
    </alternativeName>
</protein>
<comment type="function">
    <text evidence="1">Specifically methylates position 2 of adenine 2503 in 23S rRNA and position 2 of adenine 37 in tRNAs. m2A2503 modification seems to play a crucial role in the proofreading step occurring at the peptidyl transferase center and thus would serve to optimize ribosomal fidelity.</text>
</comment>
<comment type="catalytic activity">
    <reaction evidence="1">
        <text>adenosine(2503) in 23S rRNA + 2 reduced [2Fe-2S]-[ferredoxin] + 2 S-adenosyl-L-methionine = 2-methyladenosine(2503) in 23S rRNA + 5'-deoxyadenosine + L-methionine + 2 oxidized [2Fe-2S]-[ferredoxin] + S-adenosyl-L-homocysteine</text>
        <dbReference type="Rhea" id="RHEA:42916"/>
        <dbReference type="Rhea" id="RHEA-COMP:10000"/>
        <dbReference type="Rhea" id="RHEA-COMP:10001"/>
        <dbReference type="Rhea" id="RHEA-COMP:10152"/>
        <dbReference type="Rhea" id="RHEA-COMP:10282"/>
        <dbReference type="ChEBI" id="CHEBI:17319"/>
        <dbReference type="ChEBI" id="CHEBI:33737"/>
        <dbReference type="ChEBI" id="CHEBI:33738"/>
        <dbReference type="ChEBI" id="CHEBI:57844"/>
        <dbReference type="ChEBI" id="CHEBI:57856"/>
        <dbReference type="ChEBI" id="CHEBI:59789"/>
        <dbReference type="ChEBI" id="CHEBI:74411"/>
        <dbReference type="ChEBI" id="CHEBI:74497"/>
        <dbReference type="EC" id="2.1.1.192"/>
    </reaction>
</comment>
<comment type="catalytic activity">
    <reaction evidence="1">
        <text>adenosine(37) in tRNA + 2 reduced [2Fe-2S]-[ferredoxin] + 2 S-adenosyl-L-methionine = 2-methyladenosine(37) in tRNA + 5'-deoxyadenosine + L-methionine + 2 oxidized [2Fe-2S]-[ferredoxin] + S-adenosyl-L-homocysteine</text>
        <dbReference type="Rhea" id="RHEA:43332"/>
        <dbReference type="Rhea" id="RHEA-COMP:10000"/>
        <dbReference type="Rhea" id="RHEA-COMP:10001"/>
        <dbReference type="Rhea" id="RHEA-COMP:10162"/>
        <dbReference type="Rhea" id="RHEA-COMP:10485"/>
        <dbReference type="ChEBI" id="CHEBI:17319"/>
        <dbReference type="ChEBI" id="CHEBI:33737"/>
        <dbReference type="ChEBI" id="CHEBI:33738"/>
        <dbReference type="ChEBI" id="CHEBI:57844"/>
        <dbReference type="ChEBI" id="CHEBI:57856"/>
        <dbReference type="ChEBI" id="CHEBI:59789"/>
        <dbReference type="ChEBI" id="CHEBI:74411"/>
        <dbReference type="ChEBI" id="CHEBI:74497"/>
        <dbReference type="EC" id="2.1.1.192"/>
    </reaction>
</comment>
<comment type="cofactor">
    <cofactor evidence="1">
        <name>[4Fe-4S] cluster</name>
        <dbReference type="ChEBI" id="CHEBI:49883"/>
    </cofactor>
    <text evidence="1">Binds 1 [4Fe-4S] cluster. The cluster is coordinated with 3 cysteines and an exchangeable S-adenosyl-L-methionine.</text>
</comment>
<comment type="subcellular location">
    <subcellularLocation>
        <location evidence="1">Cytoplasm</location>
    </subcellularLocation>
</comment>
<comment type="miscellaneous">
    <text evidence="1">Reaction proceeds by a ping-pong mechanism involving intermediate methylation of a conserved cysteine residue.</text>
</comment>
<comment type="similarity">
    <text evidence="1">Belongs to the radical SAM superfamily. RlmN family.</text>
</comment>
<sequence>MSEHIVTPEDASAAPAIKSEKINLLDLNRQAMREFFKTLGEKPFRADQVMKWMYHYCCDDFDEMTDINKVLRGKLKEVAEIRAPEVVEEQRSSDGTIKWAIAVGDQRVETVYIPEDDRATLCVSSQVGCALECKFCSTAQQGFNRNLRVSEIIGQVWRAAKIIGAAKVTGQRPITNVVMMGMGEPLLNLTNVVPAMEIMLDDFGFGLSKRRVTLSTSGVVPALDKLGDMIDVALAISLHAPNDEIRDEIVPINKKYNIETFLAAVRRYIGKSNANQGRVTIEYVMLDHVNDGTEHAHQLAELLKDTPCKINLIPWNPFPGAPYGRSSNSRIDRFSKVLMSYGFTTIVRKTRGDDIDAACGQLAGDVIDRTKRTMRKRMQGEPIAVKAV</sequence>
<dbReference type="EC" id="2.1.1.192" evidence="1"/>
<dbReference type="EMBL" id="CP000783">
    <property type="protein sequence ID" value="ABU76018.1"/>
    <property type="molecule type" value="Genomic_DNA"/>
</dbReference>
<dbReference type="RefSeq" id="WP_004386974.1">
    <property type="nucleotide sequence ID" value="NC_009778.1"/>
</dbReference>
<dbReference type="SMR" id="A7MGV3"/>
<dbReference type="KEGG" id="esa:ESA_00741"/>
<dbReference type="HOGENOM" id="CLU_029101_0_0_6"/>
<dbReference type="Proteomes" id="UP000000260">
    <property type="component" value="Chromosome"/>
</dbReference>
<dbReference type="GO" id="GO:0005737">
    <property type="term" value="C:cytoplasm"/>
    <property type="evidence" value="ECO:0007669"/>
    <property type="project" value="UniProtKB-SubCell"/>
</dbReference>
<dbReference type="GO" id="GO:0051539">
    <property type="term" value="F:4 iron, 4 sulfur cluster binding"/>
    <property type="evidence" value="ECO:0007669"/>
    <property type="project" value="UniProtKB-UniRule"/>
</dbReference>
<dbReference type="GO" id="GO:0046872">
    <property type="term" value="F:metal ion binding"/>
    <property type="evidence" value="ECO:0007669"/>
    <property type="project" value="UniProtKB-KW"/>
</dbReference>
<dbReference type="GO" id="GO:0070040">
    <property type="term" value="F:rRNA (adenine(2503)-C2-)-methyltransferase activity"/>
    <property type="evidence" value="ECO:0007669"/>
    <property type="project" value="UniProtKB-UniRule"/>
</dbReference>
<dbReference type="GO" id="GO:0019843">
    <property type="term" value="F:rRNA binding"/>
    <property type="evidence" value="ECO:0007669"/>
    <property type="project" value="UniProtKB-UniRule"/>
</dbReference>
<dbReference type="GO" id="GO:0002935">
    <property type="term" value="F:tRNA (adenine(37)-C2)-methyltransferase activity"/>
    <property type="evidence" value="ECO:0007669"/>
    <property type="project" value="UniProtKB-UniRule"/>
</dbReference>
<dbReference type="GO" id="GO:0000049">
    <property type="term" value="F:tRNA binding"/>
    <property type="evidence" value="ECO:0007669"/>
    <property type="project" value="UniProtKB-UniRule"/>
</dbReference>
<dbReference type="GO" id="GO:0070475">
    <property type="term" value="P:rRNA base methylation"/>
    <property type="evidence" value="ECO:0007669"/>
    <property type="project" value="UniProtKB-UniRule"/>
</dbReference>
<dbReference type="GO" id="GO:0030488">
    <property type="term" value="P:tRNA methylation"/>
    <property type="evidence" value="ECO:0007669"/>
    <property type="project" value="UniProtKB-UniRule"/>
</dbReference>
<dbReference type="CDD" id="cd01335">
    <property type="entry name" value="Radical_SAM"/>
    <property type="match status" value="1"/>
</dbReference>
<dbReference type="FunFam" id="1.10.150.530:FF:000001">
    <property type="entry name" value="Dual-specificity RNA methyltransferase RlmN"/>
    <property type="match status" value="1"/>
</dbReference>
<dbReference type="FunFam" id="3.20.20.70:FF:000008">
    <property type="entry name" value="Dual-specificity RNA methyltransferase RlmN"/>
    <property type="match status" value="1"/>
</dbReference>
<dbReference type="Gene3D" id="1.10.150.530">
    <property type="match status" value="1"/>
</dbReference>
<dbReference type="Gene3D" id="3.20.20.70">
    <property type="entry name" value="Aldolase class I"/>
    <property type="match status" value="1"/>
</dbReference>
<dbReference type="HAMAP" id="MF_01849">
    <property type="entry name" value="RNA_methyltr_RlmN"/>
    <property type="match status" value="1"/>
</dbReference>
<dbReference type="InterPro" id="IPR013785">
    <property type="entry name" value="Aldolase_TIM"/>
</dbReference>
<dbReference type="InterPro" id="IPR040072">
    <property type="entry name" value="Methyltransferase_A"/>
</dbReference>
<dbReference type="InterPro" id="IPR048641">
    <property type="entry name" value="RlmN_N"/>
</dbReference>
<dbReference type="InterPro" id="IPR027492">
    <property type="entry name" value="RNA_MTrfase_RlmN"/>
</dbReference>
<dbReference type="InterPro" id="IPR004383">
    <property type="entry name" value="rRNA_lsu_MTrfase_RlmN/Cfr"/>
</dbReference>
<dbReference type="InterPro" id="IPR007197">
    <property type="entry name" value="rSAM"/>
</dbReference>
<dbReference type="NCBIfam" id="NF008396">
    <property type="entry name" value="PRK11194.1"/>
    <property type="match status" value="1"/>
</dbReference>
<dbReference type="NCBIfam" id="TIGR00048">
    <property type="entry name" value="rRNA_mod_RlmN"/>
    <property type="match status" value="1"/>
</dbReference>
<dbReference type="PANTHER" id="PTHR30544">
    <property type="entry name" value="23S RRNA METHYLTRANSFERASE"/>
    <property type="match status" value="1"/>
</dbReference>
<dbReference type="PANTHER" id="PTHR30544:SF5">
    <property type="entry name" value="RADICAL SAM CORE DOMAIN-CONTAINING PROTEIN"/>
    <property type="match status" value="1"/>
</dbReference>
<dbReference type="Pfam" id="PF04055">
    <property type="entry name" value="Radical_SAM"/>
    <property type="match status" value="1"/>
</dbReference>
<dbReference type="Pfam" id="PF21016">
    <property type="entry name" value="RlmN_N"/>
    <property type="match status" value="1"/>
</dbReference>
<dbReference type="PIRSF" id="PIRSF006004">
    <property type="entry name" value="CHP00048"/>
    <property type="match status" value="1"/>
</dbReference>
<dbReference type="SFLD" id="SFLDF00275">
    <property type="entry name" value="adenosine_C2_methyltransferase"/>
    <property type="match status" value="1"/>
</dbReference>
<dbReference type="SFLD" id="SFLDS00029">
    <property type="entry name" value="Radical_SAM"/>
    <property type="match status" value="1"/>
</dbReference>
<dbReference type="SUPFAM" id="SSF102114">
    <property type="entry name" value="Radical SAM enzymes"/>
    <property type="match status" value="1"/>
</dbReference>
<dbReference type="PROSITE" id="PS51918">
    <property type="entry name" value="RADICAL_SAM"/>
    <property type="match status" value="1"/>
</dbReference>
<accession>A7MGV3</accession>
<reference key="1">
    <citation type="journal article" date="2010" name="PLoS ONE">
        <title>Genome sequence of Cronobacter sakazakii BAA-894 and comparative genomic hybridization analysis with other Cronobacter species.</title>
        <authorList>
            <person name="Kucerova E."/>
            <person name="Clifton S.W."/>
            <person name="Xia X.Q."/>
            <person name="Long F."/>
            <person name="Porwollik S."/>
            <person name="Fulton L."/>
            <person name="Fronick C."/>
            <person name="Minx P."/>
            <person name="Kyung K."/>
            <person name="Warren W."/>
            <person name="Fulton R."/>
            <person name="Feng D."/>
            <person name="Wollam A."/>
            <person name="Shah N."/>
            <person name="Bhonagiri V."/>
            <person name="Nash W.E."/>
            <person name="Hallsworth-Pepin K."/>
            <person name="Wilson R.K."/>
            <person name="McClelland M."/>
            <person name="Forsythe S.J."/>
        </authorList>
    </citation>
    <scope>NUCLEOTIDE SEQUENCE [LARGE SCALE GENOMIC DNA]</scope>
    <source>
        <strain>ATCC BAA-894</strain>
    </source>
</reference>
<name>RLMN_CROS8</name>
<organism>
    <name type="scientific">Cronobacter sakazakii (strain ATCC BAA-894)</name>
    <name type="common">Enterobacter sakazakii</name>
    <dbReference type="NCBI Taxonomy" id="290339"/>
    <lineage>
        <taxon>Bacteria</taxon>
        <taxon>Pseudomonadati</taxon>
        <taxon>Pseudomonadota</taxon>
        <taxon>Gammaproteobacteria</taxon>
        <taxon>Enterobacterales</taxon>
        <taxon>Enterobacteriaceae</taxon>
        <taxon>Cronobacter</taxon>
    </lineage>
</organism>
<proteinExistence type="inferred from homology"/>